<protein>
    <recommendedName>
        <fullName evidence="1">Large ribosomal subunit protein uL29</fullName>
    </recommendedName>
    <alternativeName>
        <fullName evidence="2">50S ribosomal protein L29</fullName>
    </alternativeName>
</protein>
<proteinExistence type="inferred from homology"/>
<reference key="1">
    <citation type="journal article" date="2008" name="J. Bacteriol.">
        <title>Genome sequence of a nephritogenic and highly transformable M49 strain of Streptococcus pyogenes.</title>
        <authorList>
            <person name="McShan W.M."/>
            <person name="Ferretti J.J."/>
            <person name="Karasawa T."/>
            <person name="Suvorov A.N."/>
            <person name="Lin S."/>
            <person name="Qin B."/>
            <person name="Jia H."/>
            <person name="Kenton S."/>
            <person name="Najar F."/>
            <person name="Wu H."/>
            <person name="Scott J."/>
            <person name="Roe B.A."/>
            <person name="Savic D.J."/>
        </authorList>
    </citation>
    <scope>NUCLEOTIDE SEQUENCE [LARGE SCALE GENOMIC DNA]</scope>
    <source>
        <strain>NZ131</strain>
    </source>
</reference>
<comment type="similarity">
    <text evidence="1">Belongs to the universal ribosomal protein uL29 family.</text>
</comment>
<name>RL29_STRPZ</name>
<accession>B5XJ44</accession>
<dbReference type="EMBL" id="CP000829">
    <property type="protein sequence ID" value="ACI60412.1"/>
    <property type="molecule type" value="Genomic_DNA"/>
</dbReference>
<dbReference type="SMR" id="B5XJ44"/>
<dbReference type="KEGG" id="soz:Spy49_0055"/>
<dbReference type="HOGENOM" id="CLU_158491_5_2_9"/>
<dbReference type="Proteomes" id="UP000001039">
    <property type="component" value="Chromosome"/>
</dbReference>
<dbReference type="GO" id="GO:0022625">
    <property type="term" value="C:cytosolic large ribosomal subunit"/>
    <property type="evidence" value="ECO:0007669"/>
    <property type="project" value="TreeGrafter"/>
</dbReference>
<dbReference type="GO" id="GO:0003735">
    <property type="term" value="F:structural constituent of ribosome"/>
    <property type="evidence" value="ECO:0007669"/>
    <property type="project" value="InterPro"/>
</dbReference>
<dbReference type="GO" id="GO:0006412">
    <property type="term" value="P:translation"/>
    <property type="evidence" value="ECO:0007669"/>
    <property type="project" value="UniProtKB-UniRule"/>
</dbReference>
<dbReference type="CDD" id="cd00427">
    <property type="entry name" value="Ribosomal_L29_HIP"/>
    <property type="match status" value="1"/>
</dbReference>
<dbReference type="FunFam" id="1.10.287.310:FF:000001">
    <property type="entry name" value="50S ribosomal protein L29"/>
    <property type="match status" value="1"/>
</dbReference>
<dbReference type="Gene3D" id="1.10.287.310">
    <property type="match status" value="1"/>
</dbReference>
<dbReference type="HAMAP" id="MF_00374">
    <property type="entry name" value="Ribosomal_uL29"/>
    <property type="match status" value="1"/>
</dbReference>
<dbReference type="InterPro" id="IPR050063">
    <property type="entry name" value="Ribosomal_protein_uL29"/>
</dbReference>
<dbReference type="InterPro" id="IPR001854">
    <property type="entry name" value="Ribosomal_uL29"/>
</dbReference>
<dbReference type="InterPro" id="IPR018254">
    <property type="entry name" value="Ribosomal_uL29_CS"/>
</dbReference>
<dbReference type="InterPro" id="IPR036049">
    <property type="entry name" value="Ribosomal_uL29_sf"/>
</dbReference>
<dbReference type="NCBIfam" id="TIGR00012">
    <property type="entry name" value="L29"/>
    <property type="match status" value="1"/>
</dbReference>
<dbReference type="PANTHER" id="PTHR10916">
    <property type="entry name" value="60S RIBOSOMAL PROTEIN L35/50S RIBOSOMAL PROTEIN L29"/>
    <property type="match status" value="1"/>
</dbReference>
<dbReference type="PANTHER" id="PTHR10916:SF0">
    <property type="entry name" value="LARGE RIBOSOMAL SUBUNIT PROTEIN UL29C"/>
    <property type="match status" value="1"/>
</dbReference>
<dbReference type="Pfam" id="PF00831">
    <property type="entry name" value="Ribosomal_L29"/>
    <property type="match status" value="1"/>
</dbReference>
<dbReference type="SUPFAM" id="SSF46561">
    <property type="entry name" value="Ribosomal protein L29 (L29p)"/>
    <property type="match status" value="1"/>
</dbReference>
<dbReference type="PROSITE" id="PS00579">
    <property type="entry name" value="RIBOSOMAL_L29"/>
    <property type="match status" value="1"/>
</dbReference>
<feature type="chain" id="PRO_1000121826" description="Large ribosomal subunit protein uL29">
    <location>
        <begin position="1"/>
        <end position="68"/>
    </location>
</feature>
<sequence>MKLQEIKDFVKELRGLSQEELAKKENELKKELFDLRFQAAAGQLEKTARLDEVKKQIARVKTVQSEMK</sequence>
<organism>
    <name type="scientific">Streptococcus pyogenes serotype M49 (strain NZ131)</name>
    <dbReference type="NCBI Taxonomy" id="471876"/>
    <lineage>
        <taxon>Bacteria</taxon>
        <taxon>Bacillati</taxon>
        <taxon>Bacillota</taxon>
        <taxon>Bacilli</taxon>
        <taxon>Lactobacillales</taxon>
        <taxon>Streptococcaceae</taxon>
        <taxon>Streptococcus</taxon>
    </lineage>
</organism>
<evidence type="ECO:0000255" key="1">
    <source>
        <dbReference type="HAMAP-Rule" id="MF_00374"/>
    </source>
</evidence>
<evidence type="ECO:0000305" key="2"/>
<gene>
    <name evidence="1" type="primary">rpmC</name>
    <name type="ordered locus">Spy49_0055</name>
</gene>
<keyword id="KW-0687">Ribonucleoprotein</keyword>
<keyword id="KW-0689">Ribosomal protein</keyword>